<protein>
    <recommendedName>
        <fullName evidence="1">Cytochrome c-type biogenesis protein CcmE</fullName>
    </recommendedName>
    <alternativeName>
        <fullName evidence="1">Cytochrome c maturation protein E</fullName>
    </alternativeName>
    <alternativeName>
        <fullName evidence="1">Heme chaperone CcmE</fullName>
    </alternativeName>
</protein>
<gene>
    <name evidence="1" type="primary">ccmE</name>
    <name evidence="1" type="synonym">cycJ</name>
</gene>
<evidence type="ECO:0000255" key="1">
    <source>
        <dbReference type="HAMAP-Rule" id="MF_01959"/>
    </source>
</evidence>
<evidence type="ECO:0000256" key="2">
    <source>
        <dbReference type="SAM" id="MobiDB-lite"/>
    </source>
</evidence>
<accession>Q8GQ96</accession>
<comment type="function">
    <text evidence="1">Heme chaperone required for the biogenesis of c-type cytochromes. Transiently binds heme delivered by CcmC and transfers the heme to apo-cytochromes in a process facilitated by CcmF and CcmH.</text>
</comment>
<comment type="subcellular location">
    <subcellularLocation>
        <location evidence="1">Cell inner membrane</location>
        <topology evidence="1">Single-pass type II membrane protein</topology>
        <orientation evidence="1">Periplasmic side</orientation>
    </subcellularLocation>
</comment>
<comment type="similarity">
    <text evidence="1">Belongs to the CcmE/CycJ family.</text>
</comment>
<sequence>MKPRNRRIALIVAGLSALGIATALVLNAFQSNLVFFFTPSQVSAGEAPLERTFRVGGMVERGSLKRQRGELAVQFVITDTVKAIPVTYSGILPDLFSEGKGVVVQGRLDSAGLFRAEEVLAKHDENYMPPEAQHALDEVQKKPASRKP</sequence>
<feature type="chain" id="PRO_0000238835" description="Cytochrome c-type biogenesis protein CcmE">
    <location>
        <begin position="1"/>
        <end position="148"/>
    </location>
</feature>
<feature type="topological domain" description="Cytoplasmic" evidence="1">
    <location>
        <begin position="1"/>
        <end position="7"/>
    </location>
</feature>
<feature type="transmembrane region" description="Helical; Signal-anchor for type II membrane protein" evidence="1">
    <location>
        <begin position="8"/>
        <end position="28"/>
    </location>
</feature>
<feature type="topological domain" description="Periplasmic" evidence="1">
    <location>
        <begin position="29"/>
        <end position="148"/>
    </location>
</feature>
<feature type="region of interest" description="Disordered" evidence="2">
    <location>
        <begin position="128"/>
        <end position="148"/>
    </location>
</feature>
<feature type="binding site" description="covalent" evidence="1">
    <location>
        <position position="123"/>
    </location>
    <ligand>
        <name>heme</name>
        <dbReference type="ChEBI" id="CHEBI:30413"/>
    </ligand>
</feature>
<feature type="binding site" description="axial binding residue" evidence="1">
    <location>
        <position position="127"/>
    </location>
    <ligand>
        <name>heme</name>
        <dbReference type="ChEBI" id="CHEBI:30413"/>
    </ligand>
    <ligandPart>
        <name>Fe</name>
        <dbReference type="ChEBI" id="CHEBI:18248"/>
    </ligandPart>
</feature>
<reference key="1">
    <citation type="journal article" date="2002" name="J. Bacteriol.">
        <title>Gene islands integrated into tRNA(Gly) genes confer genome diversity on a Pseudomonas aeruginosa clone.</title>
        <authorList>
            <person name="Larbig K.D."/>
            <person name="Christmann A."/>
            <person name="Johann A."/>
            <person name="Klockgether J."/>
            <person name="Hartsch T."/>
            <person name="Merkl R."/>
            <person name="Wiehlmann L."/>
            <person name="Fritz H.-J."/>
            <person name="Tuemmler B."/>
        </authorList>
    </citation>
    <scope>NUCLEOTIDE SEQUENCE [GENOMIC DNA]</scope>
    <source>
        <strain>C</strain>
    </source>
</reference>
<organism>
    <name type="scientific">Pseudomonas aeruginosa</name>
    <dbReference type="NCBI Taxonomy" id="287"/>
    <lineage>
        <taxon>Bacteria</taxon>
        <taxon>Pseudomonadati</taxon>
        <taxon>Pseudomonadota</taxon>
        <taxon>Gammaproteobacteria</taxon>
        <taxon>Pseudomonadales</taxon>
        <taxon>Pseudomonadaceae</taxon>
        <taxon>Pseudomonas</taxon>
    </lineage>
</organism>
<proteinExistence type="inferred from homology"/>
<dbReference type="EMBL" id="AF440523">
    <property type="protein sequence ID" value="AAN62107.1"/>
    <property type="molecule type" value="Genomic_DNA"/>
</dbReference>
<dbReference type="RefSeq" id="WP_003149827.1">
    <property type="nucleotide sequence ID" value="NZ_WXZT01000006.1"/>
</dbReference>
<dbReference type="SMR" id="Q8GQ96"/>
<dbReference type="PATRIC" id="fig|287.1867.peg.863"/>
<dbReference type="GO" id="GO:0005886">
    <property type="term" value="C:plasma membrane"/>
    <property type="evidence" value="ECO:0007669"/>
    <property type="project" value="UniProtKB-SubCell"/>
</dbReference>
<dbReference type="GO" id="GO:0020037">
    <property type="term" value="F:heme binding"/>
    <property type="evidence" value="ECO:0007669"/>
    <property type="project" value="InterPro"/>
</dbReference>
<dbReference type="GO" id="GO:0046872">
    <property type="term" value="F:metal ion binding"/>
    <property type="evidence" value="ECO:0007669"/>
    <property type="project" value="UniProtKB-KW"/>
</dbReference>
<dbReference type="GO" id="GO:0017004">
    <property type="term" value="P:cytochrome complex assembly"/>
    <property type="evidence" value="ECO:0007669"/>
    <property type="project" value="UniProtKB-KW"/>
</dbReference>
<dbReference type="FunFam" id="2.40.50.140:FF:000104">
    <property type="entry name" value="Cytochrome c-type biogenesis protein CcmE"/>
    <property type="match status" value="1"/>
</dbReference>
<dbReference type="Gene3D" id="2.40.50.140">
    <property type="entry name" value="Nucleic acid-binding proteins"/>
    <property type="match status" value="1"/>
</dbReference>
<dbReference type="HAMAP" id="MF_01959">
    <property type="entry name" value="CcmE"/>
    <property type="match status" value="1"/>
</dbReference>
<dbReference type="InterPro" id="IPR004329">
    <property type="entry name" value="CcmE"/>
</dbReference>
<dbReference type="InterPro" id="IPR036127">
    <property type="entry name" value="CcmE-like_sf"/>
</dbReference>
<dbReference type="InterPro" id="IPR012340">
    <property type="entry name" value="NA-bd_OB-fold"/>
</dbReference>
<dbReference type="NCBIfam" id="NF009727">
    <property type="entry name" value="PRK13254.1-1"/>
    <property type="match status" value="1"/>
</dbReference>
<dbReference type="NCBIfam" id="NF009729">
    <property type="entry name" value="PRK13254.1-3"/>
    <property type="match status" value="1"/>
</dbReference>
<dbReference type="NCBIfam" id="NF009731">
    <property type="entry name" value="PRK13254.1-5"/>
    <property type="match status" value="1"/>
</dbReference>
<dbReference type="PANTHER" id="PTHR34128">
    <property type="entry name" value="CYTOCHROME C-TYPE BIOGENESIS PROTEIN CCME HOMOLOG, MITOCHONDRIAL"/>
    <property type="match status" value="1"/>
</dbReference>
<dbReference type="PANTHER" id="PTHR34128:SF2">
    <property type="entry name" value="CYTOCHROME C-TYPE BIOGENESIS PROTEIN CCME HOMOLOG, MITOCHONDRIAL"/>
    <property type="match status" value="1"/>
</dbReference>
<dbReference type="Pfam" id="PF03100">
    <property type="entry name" value="CcmE"/>
    <property type="match status" value="1"/>
</dbReference>
<dbReference type="SUPFAM" id="SSF82093">
    <property type="entry name" value="Heme chaperone CcmE"/>
    <property type="match status" value="1"/>
</dbReference>
<name>CCME_PSEAI</name>
<keyword id="KW-0997">Cell inner membrane</keyword>
<keyword id="KW-1003">Cell membrane</keyword>
<keyword id="KW-0201">Cytochrome c-type biogenesis</keyword>
<keyword id="KW-0349">Heme</keyword>
<keyword id="KW-0408">Iron</keyword>
<keyword id="KW-0472">Membrane</keyword>
<keyword id="KW-0479">Metal-binding</keyword>
<keyword id="KW-0735">Signal-anchor</keyword>
<keyword id="KW-0812">Transmembrane</keyword>
<keyword id="KW-1133">Transmembrane helix</keyword>